<organism>
    <name type="scientific">Strongylocentrotus purpuratus</name>
    <name type="common">Purple sea urchin</name>
    <dbReference type="NCBI Taxonomy" id="7668"/>
    <lineage>
        <taxon>Eukaryota</taxon>
        <taxon>Metazoa</taxon>
        <taxon>Echinodermata</taxon>
        <taxon>Eleutherozoa</taxon>
        <taxon>Echinozoa</taxon>
        <taxon>Echinoidea</taxon>
        <taxon>Euechinoidea</taxon>
        <taxon>Echinacea</taxon>
        <taxon>Camarodonta</taxon>
        <taxon>Echinidea</taxon>
        <taxon>Strongylocentrotidae</taxon>
        <taxon>Strongylocentrotus</taxon>
    </lineage>
</organism>
<feature type="chain" id="PRO_0000071900" description="Late histone H2B.L4">
    <location>
        <begin position="1" status="less than"/>
        <end position="107"/>
    </location>
</feature>
<feature type="glycosylation site" description="O-linked (GlcNAc) serine" evidence="1">
    <location>
        <position position="94"/>
    </location>
</feature>
<feature type="cross-link" description="Glycyl lysine isopeptide (Lys-Gly) (interchain with G-Cter in ubiquitin)" evidence="3">
    <location>
        <position position="102"/>
    </location>
</feature>
<feature type="non-terminal residue">
    <location>
        <position position="1"/>
    </location>
</feature>
<accession>P16890</accession>
<evidence type="ECO:0000250" key="1"/>
<evidence type="ECO:0000305" key="2"/>
<evidence type="ECO:0000305" key="3">
    <source>
    </source>
</evidence>
<comment type="function">
    <text>Core component of nucleosome. Nucleosomes wrap and compact DNA into chromatin, limiting DNA accessibility to the cellular machineries which require DNA as a template. Histones thereby play a central role in transcription regulation, DNA repair, DNA replication and chromosomal stability. DNA accessibility is regulated via a complex set of post-translational modifications of histones, also called histone code, and nucleosome remodeling.</text>
</comment>
<comment type="subunit">
    <text>The nucleosome is a histone octamer containing two molecules each of H2A, H2B, H3 and H4 assembled in one H3-H4 heterotetramer and two H2A-H2B heterodimers. The octamer wraps approximately 147 bp of DNA.</text>
</comment>
<comment type="subcellular location">
    <subcellularLocation>
        <location>Nucleus</location>
    </subcellularLocation>
    <subcellularLocation>
        <location>Chromosome</location>
    </subcellularLocation>
</comment>
<comment type="PTM">
    <text evidence="1">Monoubiquitination gives a specific tag for epigenetic transcriptional activation and is also prerequisite for histone H3 'Lys-4' and 'Lys-79' methylation.</text>
</comment>
<comment type="PTM">
    <text evidence="1">GlcNAcylation at Ser-94 promotes monoubiquitination of Lys-102. It fluctuates in response to extracellular glucose, and associates with transcribed genes (By similarity).</text>
</comment>
<comment type="similarity">
    <text evidence="2">Belongs to the histone H2B family.</text>
</comment>
<keyword id="KW-0158">Chromosome</keyword>
<keyword id="KW-0238">DNA-binding</keyword>
<keyword id="KW-0325">Glycoprotein</keyword>
<keyword id="KW-1017">Isopeptide bond</keyword>
<keyword id="KW-0544">Nucleosome core</keyword>
<keyword id="KW-0539">Nucleus</keyword>
<keyword id="KW-1185">Reference proteome</keyword>
<keyword id="KW-0832">Ubl conjugation</keyword>
<sequence length="107" mass="12001">HASRATDGKKRRKRRKESYGIYIYKVLKQVHPDTGISSRAMSIMNSFVNDVFERIAGEASRLAQYNKKSTISSREVQTAVRLLLPGELAKHAVSEGTKAVTKYTTSK</sequence>
<name>H2BL4_STRPU</name>
<proteinExistence type="evidence at protein level"/>
<protein>
    <recommendedName>
        <fullName>Late histone H2B.L4</fullName>
    </recommendedName>
</protein>
<dbReference type="EMBL" id="X06643">
    <property type="protein sequence ID" value="CAA29852.1"/>
    <property type="molecule type" value="Genomic_DNA"/>
</dbReference>
<dbReference type="PIR" id="S01623">
    <property type="entry name" value="S01623"/>
</dbReference>
<dbReference type="SMR" id="P16890"/>
<dbReference type="STRING" id="7668.P16890"/>
<dbReference type="iPTMnet" id="P16890"/>
<dbReference type="eggNOG" id="KOG1744">
    <property type="taxonomic scope" value="Eukaryota"/>
</dbReference>
<dbReference type="HOGENOM" id="CLU_075666_2_1_1"/>
<dbReference type="InParanoid" id="P16890"/>
<dbReference type="Proteomes" id="UP000007110">
    <property type="component" value="Unassembled WGS sequence"/>
</dbReference>
<dbReference type="GO" id="GO:0000786">
    <property type="term" value="C:nucleosome"/>
    <property type="evidence" value="ECO:0007669"/>
    <property type="project" value="UniProtKB-KW"/>
</dbReference>
<dbReference type="GO" id="GO:0005634">
    <property type="term" value="C:nucleus"/>
    <property type="evidence" value="ECO:0007669"/>
    <property type="project" value="UniProtKB-SubCell"/>
</dbReference>
<dbReference type="GO" id="GO:0003677">
    <property type="term" value="F:DNA binding"/>
    <property type="evidence" value="ECO:0007669"/>
    <property type="project" value="UniProtKB-KW"/>
</dbReference>
<dbReference type="GO" id="GO:0046982">
    <property type="term" value="F:protein heterodimerization activity"/>
    <property type="evidence" value="ECO:0007669"/>
    <property type="project" value="InterPro"/>
</dbReference>
<dbReference type="GO" id="GO:0030527">
    <property type="term" value="F:structural constituent of chromatin"/>
    <property type="evidence" value="ECO:0007669"/>
    <property type="project" value="InterPro"/>
</dbReference>
<dbReference type="CDD" id="cd22910">
    <property type="entry name" value="HFD_H2B"/>
    <property type="match status" value="1"/>
</dbReference>
<dbReference type="FunFam" id="1.10.20.10:FF:000016">
    <property type="entry name" value="Histone H2B"/>
    <property type="match status" value="1"/>
</dbReference>
<dbReference type="Gene3D" id="1.10.20.10">
    <property type="entry name" value="Histone, subunit A"/>
    <property type="match status" value="1"/>
</dbReference>
<dbReference type="InterPro" id="IPR009072">
    <property type="entry name" value="Histone-fold"/>
</dbReference>
<dbReference type="InterPro" id="IPR007125">
    <property type="entry name" value="Histone_H2A/H2B/H3"/>
</dbReference>
<dbReference type="InterPro" id="IPR000558">
    <property type="entry name" value="Histone_H2B"/>
</dbReference>
<dbReference type="InterPro" id="IPR055333">
    <property type="entry name" value="HISTONE_H2B_site"/>
</dbReference>
<dbReference type="PANTHER" id="PTHR23428">
    <property type="entry name" value="HISTONE H2B"/>
    <property type="match status" value="1"/>
</dbReference>
<dbReference type="Pfam" id="PF00125">
    <property type="entry name" value="Histone"/>
    <property type="match status" value="1"/>
</dbReference>
<dbReference type="PRINTS" id="PR00621">
    <property type="entry name" value="HISTONEH2B"/>
</dbReference>
<dbReference type="SMART" id="SM00427">
    <property type="entry name" value="H2B"/>
    <property type="match status" value="1"/>
</dbReference>
<dbReference type="SUPFAM" id="SSF47113">
    <property type="entry name" value="Histone-fold"/>
    <property type="match status" value="1"/>
</dbReference>
<dbReference type="PROSITE" id="PS00357">
    <property type="entry name" value="HISTONE_H2B"/>
    <property type="match status" value="1"/>
</dbReference>
<reference key="1">
    <citation type="journal article" date="1987" name="Nucleic Acids Res.">
        <title>Evolution of late H2A, H2B, and H4 histone genes of the sea urchin, Strongylocentrotus purpuratus.</title>
        <authorList>
            <person name="Maxson R."/>
            <person name="Mohun T."/>
            <person name="Gormezano G."/>
            <person name="Kedes L."/>
        </authorList>
    </citation>
    <scope>NUCLEOTIDE SEQUENCE [GENOMIC DNA]</scope>
</reference>
<reference key="2">
    <citation type="journal article" date="1995" name="Dev. Genet.">
        <title>Embryonic regulation of histone ubiquitination in the sea urchin.</title>
        <authorList>
            <person name="Jasinskiene N."/>
            <person name="Jasinskas A."/>
            <person name="Langmore J.P."/>
        </authorList>
    </citation>
    <scope>UBIQUITINATION</scope>
</reference>